<name>RSMA_LEUCK</name>
<gene>
    <name evidence="1" type="primary">rsmA</name>
    <name evidence="1" type="synonym">ksgA</name>
    <name type="ordered locus">LCK_01357</name>
</gene>
<reference key="1">
    <citation type="journal article" date="2008" name="J. Bacteriol.">
        <title>Complete genome sequence of Leuconostoc citreum KM20.</title>
        <authorList>
            <person name="Kim J.F."/>
            <person name="Jeong H."/>
            <person name="Lee J.-S."/>
            <person name="Choi S.-H."/>
            <person name="Ha M."/>
            <person name="Hur C.-G."/>
            <person name="Kim J.-S."/>
            <person name="Lee S."/>
            <person name="Park H.-S."/>
            <person name="Park Y.-H."/>
            <person name="Oh T.K."/>
        </authorList>
    </citation>
    <scope>NUCLEOTIDE SEQUENCE [LARGE SCALE GENOMIC DNA]</scope>
    <source>
        <strain>KM20</strain>
    </source>
</reference>
<feature type="chain" id="PRO_1000130289" description="Ribosomal RNA small subunit methyltransferase A">
    <location>
        <begin position="1"/>
        <end position="295"/>
    </location>
</feature>
<feature type="binding site" evidence="1">
    <location>
        <position position="31"/>
    </location>
    <ligand>
        <name>S-adenosyl-L-methionine</name>
        <dbReference type="ChEBI" id="CHEBI:59789"/>
    </ligand>
</feature>
<feature type="binding site" evidence="1">
    <location>
        <position position="33"/>
    </location>
    <ligand>
        <name>S-adenosyl-L-methionine</name>
        <dbReference type="ChEBI" id="CHEBI:59789"/>
    </ligand>
</feature>
<feature type="binding site" evidence="1">
    <location>
        <position position="58"/>
    </location>
    <ligand>
        <name>S-adenosyl-L-methionine</name>
        <dbReference type="ChEBI" id="CHEBI:59789"/>
    </ligand>
</feature>
<feature type="binding site" evidence="1">
    <location>
        <position position="79"/>
    </location>
    <ligand>
        <name>S-adenosyl-L-methionine</name>
        <dbReference type="ChEBI" id="CHEBI:59789"/>
    </ligand>
</feature>
<feature type="binding site" evidence="1">
    <location>
        <position position="104"/>
    </location>
    <ligand>
        <name>S-adenosyl-L-methionine</name>
        <dbReference type="ChEBI" id="CHEBI:59789"/>
    </ligand>
</feature>
<feature type="binding site" evidence="1">
    <location>
        <position position="129"/>
    </location>
    <ligand>
        <name>S-adenosyl-L-methionine</name>
        <dbReference type="ChEBI" id="CHEBI:59789"/>
    </ligand>
</feature>
<dbReference type="EC" id="2.1.1.182" evidence="1"/>
<dbReference type="EMBL" id="DQ489736">
    <property type="protein sequence ID" value="ACA83181.1"/>
    <property type="molecule type" value="Genomic_DNA"/>
</dbReference>
<dbReference type="RefSeq" id="WP_004902573.1">
    <property type="nucleotide sequence ID" value="NC_010471.1"/>
</dbReference>
<dbReference type="SMR" id="B1N079"/>
<dbReference type="STRING" id="349519.LCK_01357"/>
<dbReference type="GeneID" id="61101625"/>
<dbReference type="KEGG" id="lci:LCK_01357"/>
<dbReference type="eggNOG" id="COG0030">
    <property type="taxonomic scope" value="Bacteria"/>
</dbReference>
<dbReference type="HOGENOM" id="CLU_041220_0_0_9"/>
<dbReference type="OrthoDB" id="9814755at2"/>
<dbReference type="Proteomes" id="UP000002166">
    <property type="component" value="Chromosome"/>
</dbReference>
<dbReference type="GO" id="GO:0005829">
    <property type="term" value="C:cytosol"/>
    <property type="evidence" value="ECO:0007669"/>
    <property type="project" value="TreeGrafter"/>
</dbReference>
<dbReference type="GO" id="GO:0052908">
    <property type="term" value="F:16S rRNA (adenine(1518)-N(6)/adenine(1519)-N(6))-dimethyltransferase activity"/>
    <property type="evidence" value="ECO:0007669"/>
    <property type="project" value="UniProtKB-EC"/>
</dbReference>
<dbReference type="GO" id="GO:0003723">
    <property type="term" value="F:RNA binding"/>
    <property type="evidence" value="ECO:0007669"/>
    <property type="project" value="UniProtKB-KW"/>
</dbReference>
<dbReference type="CDD" id="cd02440">
    <property type="entry name" value="AdoMet_MTases"/>
    <property type="match status" value="1"/>
</dbReference>
<dbReference type="FunFam" id="3.40.50.150:FF:000023">
    <property type="entry name" value="Ribosomal RNA small subunit methyltransferase A"/>
    <property type="match status" value="1"/>
</dbReference>
<dbReference type="Gene3D" id="1.10.8.100">
    <property type="entry name" value="Ribosomal RNA adenine dimethylase-like, domain 2"/>
    <property type="match status" value="1"/>
</dbReference>
<dbReference type="Gene3D" id="3.40.50.150">
    <property type="entry name" value="Vaccinia Virus protein VP39"/>
    <property type="match status" value="1"/>
</dbReference>
<dbReference type="HAMAP" id="MF_00607">
    <property type="entry name" value="16SrRNA_methyltr_A"/>
    <property type="match status" value="1"/>
</dbReference>
<dbReference type="InterPro" id="IPR001737">
    <property type="entry name" value="KsgA/Erm"/>
</dbReference>
<dbReference type="InterPro" id="IPR023165">
    <property type="entry name" value="rRNA_Ade_diMease-like_C"/>
</dbReference>
<dbReference type="InterPro" id="IPR020596">
    <property type="entry name" value="rRNA_Ade_Mease_Trfase_CS"/>
</dbReference>
<dbReference type="InterPro" id="IPR020598">
    <property type="entry name" value="rRNA_Ade_methylase_Trfase_N"/>
</dbReference>
<dbReference type="InterPro" id="IPR011530">
    <property type="entry name" value="rRNA_adenine_dimethylase"/>
</dbReference>
<dbReference type="InterPro" id="IPR029063">
    <property type="entry name" value="SAM-dependent_MTases_sf"/>
</dbReference>
<dbReference type="NCBIfam" id="TIGR00755">
    <property type="entry name" value="ksgA"/>
    <property type="match status" value="1"/>
</dbReference>
<dbReference type="PANTHER" id="PTHR11727">
    <property type="entry name" value="DIMETHYLADENOSINE TRANSFERASE"/>
    <property type="match status" value="1"/>
</dbReference>
<dbReference type="PANTHER" id="PTHR11727:SF7">
    <property type="entry name" value="DIMETHYLADENOSINE TRANSFERASE-RELATED"/>
    <property type="match status" value="1"/>
</dbReference>
<dbReference type="Pfam" id="PF00398">
    <property type="entry name" value="RrnaAD"/>
    <property type="match status" value="1"/>
</dbReference>
<dbReference type="SMART" id="SM00650">
    <property type="entry name" value="rADc"/>
    <property type="match status" value="1"/>
</dbReference>
<dbReference type="SUPFAM" id="SSF53335">
    <property type="entry name" value="S-adenosyl-L-methionine-dependent methyltransferases"/>
    <property type="match status" value="1"/>
</dbReference>
<dbReference type="PROSITE" id="PS01131">
    <property type="entry name" value="RRNA_A_DIMETH"/>
    <property type="match status" value="1"/>
</dbReference>
<dbReference type="PROSITE" id="PS51689">
    <property type="entry name" value="SAM_RNA_A_N6_MT"/>
    <property type="match status" value="1"/>
</dbReference>
<sequence>MADIIDIANPTRTQAILNQYGLHAKKKFGQNFLTDLNVLHGIVDVAGITSEDYVIEIGPGIGALTEQLARSAKKVVAFEIDPHMVAVLAETLLPYDNVKVIENDILKVNLAHVIATEFGEGAHVKIVANLPYYITTPILMQLLRAKISWDNIVVMMQREVADRLNAEIGTKAYGVLTLTIQYYAQAQLAIKVPASAFNPSPNVDSAVVMLTPIVPETVVDNPDKLFSVVKGSFAHRRKSLWNNMLQMFGKQEDVKQRIQDALDSVNIASSIRAERLSLNQLTALYEALKLQGLIK</sequence>
<proteinExistence type="inferred from homology"/>
<organism>
    <name type="scientific">Leuconostoc citreum (strain KM20)</name>
    <dbReference type="NCBI Taxonomy" id="349519"/>
    <lineage>
        <taxon>Bacteria</taxon>
        <taxon>Bacillati</taxon>
        <taxon>Bacillota</taxon>
        <taxon>Bacilli</taxon>
        <taxon>Lactobacillales</taxon>
        <taxon>Lactobacillaceae</taxon>
        <taxon>Leuconostoc</taxon>
    </lineage>
</organism>
<evidence type="ECO:0000255" key="1">
    <source>
        <dbReference type="HAMAP-Rule" id="MF_00607"/>
    </source>
</evidence>
<comment type="function">
    <text evidence="1">Specifically dimethylates two adjacent adenosines (A1518 and A1519) in the loop of a conserved hairpin near the 3'-end of 16S rRNA in the 30S particle. May play a critical role in biogenesis of 30S subunits.</text>
</comment>
<comment type="catalytic activity">
    <reaction evidence="1">
        <text>adenosine(1518)/adenosine(1519) in 16S rRNA + 4 S-adenosyl-L-methionine = N(6)-dimethyladenosine(1518)/N(6)-dimethyladenosine(1519) in 16S rRNA + 4 S-adenosyl-L-homocysteine + 4 H(+)</text>
        <dbReference type="Rhea" id="RHEA:19609"/>
        <dbReference type="Rhea" id="RHEA-COMP:10232"/>
        <dbReference type="Rhea" id="RHEA-COMP:10233"/>
        <dbReference type="ChEBI" id="CHEBI:15378"/>
        <dbReference type="ChEBI" id="CHEBI:57856"/>
        <dbReference type="ChEBI" id="CHEBI:59789"/>
        <dbReference type="ChEBI" id="CHEBI:74411"/>
        <dbReference type="ChEBI" id="CHEBI:74493"/>
        <dbReference type="EC" id="2.1.1.182"/>
    </reaction>
</comment>
<comment type="subcellular location">
    <subcellularLocation>
        <location evidence="1">Cytoplasm</location>
    </subcellularLocation>
</comment>
<comment type="similarity">
    <text evidence="1">Belongs to the class I-like SAM-binding methyltransferase superfamily. rRNA adenine N(6)-methyltransferase family. RsmA subfamily.</text>
</comment>
<protein>
    <recommendedName>
        <fullName evidence="1">Ribosomal RNA small subunit methyltransferase A</fullName>
        <ecNumber evidence="1">2.1.1.182</ecNumber>
    </recommendedName>
    <alternativeName>
        <fullName evidence="1">16S rRNA (adenine(1518)-N(6)/adenine(1519)-N(6))-dimethyltransferase</fullName>
    </alternativeName>
    <alternativeName>
        <fullName evidence="1">16S rRNA dimethyladenosine transferase</fullName>
    </alternativeName>
    <alternativeName>
        <fullName evidence="1">16S rRNA dimethylase</fullName>
    </alternativeName>
    <alternativeName>
        <fullName evidence="1">S-adenosylmethionine-6-N', N'-adenosyl(rRNA) dimethyltransferase</fullName>
    </alternativeName>
</protein>
<keyword id="KW-0963">Cytoplasm</keyword>
<keyword id="KW-0489">Methyltransferase</keyword>
<keyword id="KW-1185">Reference proteome</keyword>
<keyword id="KW-0694">RNA-binding</keyword>
<keyword id="KW-0698">rRNA processing</keyword>
<keyword id="KW-0949">S-adenosyl-L-methionine</keyword>
<keyword id="KW-0808">Transferase</keyword>
<accession>B1N079</accession>